<feature type="signal peptide" description="Tat-type signal" evidence="3">
    <location>
        <begin position="1"/>
        <end position="28"/>
    </location>
</feature>
<feature type="chain" id="PRO_0000002952" description="Multicopper oxidase CueO">
    <location>
        <begin position="29"/>
        <end position="516"/>
    </location>
</feature>
<feature type="domain" description="Plastocyanin-like 1" evidence="2">
    <location>
        <begin position="55"/>
        <end position="165"/>
    </location>
</feature>
<feature type="domain" description="Plastocyanin-like 2" evidence="2">
    <location>
        <begin position="227"/>
        <end position="292"/>
    </location>
</feature>
<feature type="domain" description="Plastocyanin-like 3" evidence="2">
    <location>
        <begin position="399"/>
        <end position="516"/>
    </location>
</feature>
<feature type="binding site" description="type 2 copper site" evidence="1">
    <location>
        <position position="101"/>
    </location>
    <ligand>
        <name>Cu cation</name>
        <dbReference type="ChEBI" id="CHEBI:23378"/>
        <label>1</label>
    </ligand>
</feature>
<feature type="binding site" description="type 3 copper site" evidence="1">
    <location>
        <position position="103"/>
    </location>
    <ligand>
        <name>Cu cation</name>
        <dbReference type="ChEBI" id="CHEBI:23378"/>
        <label>2</label>
    </ligand>
</feature>
<feature type="binding site" description="type 3 copper site" evidence="1">
    <location>
        <position position="141"/>
    </location>
    <ligand>
        <name>Cu cation</name>
        <dbReference type="ChEBI" id="CHEBI:23378"/>
        <label>2</label>
    </ligand>
</feature>
<feature type="binding site" description="type 3 copper site" evidence="1">
    <location>
        <position position="143"/>
    </location>
    <ligand>
        <name>Cu cation</name>
        <dbReference type="ChEBI" id="CHEBI:23378"/>
        <label>3</label>
    </ligand>
</feature>
<feature type="binding site" description="type 1 copper site" evidence="1">
    <location>
        <position position="443"/>
    </location>
    <ligand>
        <name>Cu cation</name>
        <dbReference type="ChEBI" id="CHEBI:23378"/>
        <label>4</label>
    </ligand>
</feature>
<feature type="binding site" description="type 2 copper site" evidence="1">
    <location>
        <position position="446"/>
    </location>
    <ligand>
        <name>Cu cation</name>
        <dbReference type="ChEBI" id="CHEBI:23378"/>
        <label>1</label>
    </ligand>
</feature>
<feature type="binding site" description="type 3 copper site" evidence="1">
    <location>
        <position position="448"/>
    </location>
    <ligand>
        <name>Cu cation</name>
        <dbReference type="ChEBI" id="CHEBI:23378"/>
        <label>3</label>
    </ligand>
</feature>
<feature type="binding site" description="type 3 copper site" evidence="1">
    <location>
        <position position="499"/>
    </location>
    <ligand>
        <name>Cu cation</name>
        <dbReference type="ChEBI" id="CHEBI:23378"/>
        <label>3</label>
    </ligand>
</feature>
<feature type="binding site" description="type 1 copper site" evidence="1">
    <location>
        <position position="500"/>
    </location>
    <ligand>
        <name>Cu cation</name>
        <dbReference type="ChEBI" id="CHEBI:23378"/>
        <label>4</label>
    </ligand>
</feature>
<feature type="binding site" description="type 3 copper site" evidence="1">
    <location>
        <position position="501"/>
    </location>
    <ligand>
        <name>Cu cation</name>
        <dbReference type="ChEBI" id="CHEBI:23378"/>
        <label>2</label>
    </ligand>
</feature>
<feature type="binding site" description="type 1 copper site" evidence="1">
    <location>
        <position position="505"/>
    </location>
    <ligand>
        <name>Cu cation</name>
        <dbReference type="ChEBI" id="CHEBI:23378"/>
        <label>4</label>
    </ligand>
</feature>
<keyword id="KW-0186">Copper</keyword>
<keyword id="KW-0479">Metal-binding</keyword>
<keyword id="KW-0560">Oxidoreductase</keyword>
<keyword id="KW-0574">Periplasm</keyword>
<keyword id="KW-1185">Reference proteome</keyword>
<keyword id="KW-0677">Repeat</keyword>
<keyword id="KW-0732">Signal</keyword>
<protein>
    <recommendedName>
        <fullName evidence="1">Multicopper oxidase CueO</fullName>
        <shortName evidence="1">MCO</shortName>
        <ecNumber evidence="1">1.16.3.4</ecNumber>
    </recommendedName>
    <alternativeName>
        <fullName evidence="1">Copper efflux oxidase</fullName>
        <shortName evidence="1">Cu efflux oxidase</shortName>
    </alternativeName>
    <alternativeName>
        <fullName evidence="1">Cuprous oxidase</fullName>
    </alternativeName>
</protein>
<gene>
    <name type="primary">cueO</name>
    <name type="ordered locus">Z0133</name>
    <name type="ordered locus">ECs0127</name>
</gene>
<accession>Q8X947</accession>
<name>CUEO_ECO57</name>
<sequence>MQRRDFLKYSVALGVASALPLWSRAVFAAERPTLPIPDLLTTDARNRIQLTIGAGQSTFGEKTATTWGYNGNLLGPAVKLQRGKAVTVDIYNQLTEETTLHWHGLEVPGEVDGGPQGIIPPGGKRSVTLNVDQPAATCWFHPHQHGKTGRQVAMGLAGLVVIEDDEILKLMLPKQWGIDDVPVIVQDKKFSADGQIDYQLDVMTAAVGWFGDTLLTNGAIYPQHAAPRGWLRLRLLNGCNARSLNFATSDNRPLYVIASDGGLLPEPVKVNELPVLMGERFEVLVEVNDNKPFDLVTLPVSQMGMAIAPFDKPHPVMRIQPIAISASGALPDTLSSLPALPSLEGLTVRKLQLSMDPMLDMMGMQMLMEKYGDQAMVGMDHSQMMGHMGHGNMNHMNHGGKFDFHHANKINGQAFDMNKPMFAAAKGQYERWVISGVGDMMLHPFHIHGTQFRILSENGKPPAAHRAGWKDTVKVEGNVSEVLVKFNHDAPKERAYMAHCHLLEHEDTGMMLGFTV</sequence>
<organism>
    <name type="scientific">Escherichia coli O157:H7</name>
    <dbReference type="NCBI Taxonomy" id="83334"/>
    <lineage>
        <taxon>Bacteria</taxon>
        <taxon>Pseudomonadati</taxon>
        <taxon>Pseudomonadota</taxon>
        <taxon>Gammaproteobacteria</taxon>
        <taxon>Enterobacterales</taxon>
        <taxon>Enterobacteriaceae</taxon>
        <taxon>Escherichia</taxon>
    </lineage>
</organism>
<dbReference type="EC" id="1.16.3.4" evidence="1"/>
<dbReference type="EMBL" id="AE005174">
    <property type="protein sequence ID" value="AAG54427.1"/>
    <property type="molecule type" value="Genomic_DNA"/>
</dbReference>
<dbReference type="EMBL" id="BA000007">
    <property type="protein sequence ID" value="BAB33550.1"/>
    <property type="molecule type" value="Genomic_DNA"/>
</dbReference>
<dbReference type="PIR" id="G85495">
    <property type="entry name" value="G85495"/>
</dbReference>
<dbReference type="PIR" id="G90644">
    <property type="entry name" value="G90644"/>
</dbReference>
<dbReference type="RefSeq" id="NP_308154.1">
    <property type="nucleotide sequence ID" value="NC_002695.1"/>
</dbReference>
<dbReference type="RefSeq" id="WP_001189614.1">
    <property type="nucleotide sequence ID" value="NZ_SDVX01000001.1"/>
</dbReference>
<dbReference type="SMR" id="Q8X947"/>
<dbReference type="STRING" id="155864.Z0133"/>
<dbReference type="GeneID" id="913706"/>
<dbReference type="KEGG" id="ece:Z0133"/>
<dbReference type="KEGG" id="ecs:ECs_0127"/>
<dbReference type="PATRIC" id="fig|386585.9.peg.225"/>
<dbReference type="eggNOG" id="COG2132">
    <property type="taxonomic scope" value="Bacteria"/>
</dbReference>
<dbReference type="HOGENOM" id="CLU_009100_2_4_6"/>
<dbReference type="Proteomes" id="UP000000558">
    <property type="component" value="Chromosome"/>
</dbReference>
<dbReference type="Proteomes" id="UP000002519">
    <property type="component" value="Chromosome"/>
</dbReference>
<dbReference type="GO" id="GO:0042597">
    <property type="term" value="C:periplasmic space"/>
    <property type="evidence" value="ECO:0007669"/>
    <property type="project" value="UniProtKB-SubCell"/>
</dbReference>
<dbReference type="GO" id="GO:0005507">
    <property type="term" value="F:copper ion binding"/>
    <property type="evidence" value="ECO:0007669"/>
    <property type="project" value="InterPro"/>
</dbReference>
<dbReference type="GO" id="GO:0016491">
    <property type="term" value="F:oxidoreductase activity"/>
    <property type="evidence" value="ECO:0007669"/>
    <property type="project" value="UniProtKB-KW"/>
</dbReference>
<dbReference type="CDD" id="cd04232">
    <property type="entry name" value="CuRO_1_CueO_FtsP"/>
    <property type="match status" value="1"/>
</dbReference>
<dbReference type="CDD" id="cd13867">
    <property type="entry name" value="CuRO_2_CueO_FtsP"/>
    <property type="match status" value="1"/>
</dbReference>
<dbReference type="CDD" id="cd13890">
    <property type="entry name" value="CuRO_3_CueO_FtsP"/>
    <property type="match status" value="1"/>
</dbReference>
<dbReference type="FunFam" id="2.60.40.420:FF:000039">
    <property type="entry name" value="Blue copper oxidase CueO"/>
    <property type="match status" value="1"/>
</dbReference>
<dbReference type="FunFam" id="2.60.40.420:FF:000041">
    <property type="entry name" value="Blue copper oxidase CueO"/>
    <property type="match status" value="1"/>
</dbReference>
<dbReference type="FunFam" id="2.60.40.420:FF:000043">
    <property type="entry name" value="Blue copper oxidase CueO"/>
    <property type="match status" value="1"/>
</dbReference>
<dbReference type="Gene3D" id="2.60.40.420">
    <property type="entry name" value="Cupredoxins - blue copper proteins"/>
    <property type="match status" value="3"/>
</dbReference>
<dbReference type="InterPro" id="IPR011707">
    <property type="entry name" value="Cu-oxidase-like_N"/>
</dbReference>
<dbReference type="InterPro" id="IPR001117">
    <property type="entry name" value="Cu-oxidase_2nd"/>
</dbReference>
<dbReference type="InterPro" id="IPR011706">
    <property type="entry name" value="Cu-oxidase_C"/>
</dbReference>
<dbReference type="InterPro" id="IPR045087">
    <property type="entry name" value="Cu-oxidase_fam"/>
</dbReference>
<dbReference type="InterPro" id="IPR002355">
    <property type="entry name" value="Cu_oxidase_Cu_BS"/>
</dbReference>
<dbReference type="InterPro" id="IPR008972">
    <property type="entry name" value="Cupredoxin"/>
</dbReference>
<dbReference type="InterPro" id="IPR006311">
    <property type="entry name" value="TAT_signal"/>
</dbReference>
<dbReference type="NCBIfam" id="NF008205">
    <property type="entry name" value="PRK10965.1"/>
    <property type="match status" value="1"/>
</dbReference>
<dbReference type="PANTHER" id="PTHR48267:SF1">
    <property type="entry name" value="BILIRUBIN OXIDASE"/>
    <property type="match status" value="1"/>
</dbReference>
<dbReference type="PANTHER" id="PTHR48267">
    <property type="entry name" value="CUPREDOXIN SUPERFAMILY PROTEIN"/>
    <property type="match status" value="1"/>
</dbReference>
<dbReference type="Pfam" id="PF00394">
    <property type="entry name" value="Cu-oxidase"/>
    <property type="match status" value="1"/>
</dbReference>
<dbReference type="Pfam" id="PF07731">
    <property type="entry name" value="Cu-oxidase_2"/>
    <property type="match status" value="1"/>
</dbReference>
<dbReference type="Pfam" id="PF07732">
    <property type="entry name" value="Cu-oxidase_3"/>
    <property type="match status" value="1"/>
</dbReference>
<dbReference type="SUPFAM" id="SSF49503">
    <property type="entry name" value="Cupredoxins"/>
    <property type="match status" value="3"/>
</dbReference>
<dbReference type="PROSITE" id="PS00080">
    <property type="entry name" value="MULTICOPPER_OXIDASE2"/>
    <property type="match status" value="1"/>
</dbReference>
<dbReference type="PROSITE" id="PS51318">
    <property type="entry name" value="TAT"/>
    <property type="match status" value="1"/>
</dbReference>
<comment type="function">
    <text evidence="1">Multicopper oxidase involved in copper homeostasis and copper tolerance under aerobic conditions. Is responsible for the oxidation of Cu(+) to the less harmful Cu(2+) in the periplasm, thereby preventing Cu(+) from entering the cytoplasm.</text>
</comment>
<comment type="catalytic activity">
    <reaction evidence="1">
        <text>4 Cu(+) + O2 + 4 H(+) = 4 Cu(2+) + 2 H2O</text>
        <dbReference type="Rhea" id="RHEA:30083"/>
        <dbReference type="ChEBI" id="CHEBI:15377"/>
        <dbReference type="ChEBI" id="CHEBI:15378"/>
        <dbReference type="ChEBI" id="CHEBI:15379"/>
        <dbReference type="ChEBI" id="CHEBI:29036"/>
        <dbReference type="ChEBI" id="CHEBI:49552"/>
        <dbReference type="EC" id="1.16.3.4"/>
    </reaction>
    <physiologicalReaction direction="left-to-right" evidence="1">
        <dbReference type="Rhea" id="RHEA:30084"/>
    </physiologicalReaction>
</comment>
<comment type="cofactor">
    <cofactor evidence="1">
        <name>Cu cation</name>
        <dbReference type="ChEBI" id="CHEBI:23378"/>
    </cofactor>
    <text evidence="1">Binds 4 Cu cations per monomer.</text>
</comment>
<comment type="subunit">
    <text evidence="1">Monomer.</text>
</comment>
<comment type="subcellular location">
    <subcellularLocation>
        <location evidence="1">Periplasm</location>
    </subcellularLocation>
</comment>
<comment type="PTM">
    <text evidence="3">Predicted to be exported by the Tat system. The position of the signal peptide cleavage has not been experimentally proven.</text>
</comment>
<comment type="similarity">
    <text evidence="4">Belongs to the multicopper oxidase family.</text>
</comment>
<proteinExistence type="inferred from homology"/>
<evidence type="ECO:0000250" key="1">
    <source>
        <dbReference type="UniProtKB" id="P36649"/>
    </source>
</evidence>
<evidence type="ECO:0000255" key="2"/>
<evidence type="ECO:0000255" key="3">
    <source>
        <dbReference type="PROSITE-ProRule" id="PRU00648"/>
    </source>
</evidence>
<evidence type="ECO:0000305" key="4"/>
<reference key="1">
    <citation type="journal article" date="2001" name="Nature">
        <title>Genome sequence of enterohaemorrhagic Escherichia coli O157:H7.</title>
        <authorList>
            <person name="Perna N.T."/>
            <person name="Plunkett G. III"/>
            <person name="Burland V."/>
            <person name="Mau B."/>
            <person name="Glasner J.D."/>
            <person name="Rose D.J."/>
            <person name="Mayhew G.F."/>
            <person name="Evans P.S."/>
            <person name="Gregor J."/>
            <person name="Kirkpatrick H.A."/>
            <person name="Posfai G."/>
            <person name="Hackett J."/>
            <person name="Klink S."/>
            <person name="Boutin A."/>
            <person name="Shao Y."/>
            <person name="Miller L."/>
            <person name="Grotbeck E.J."/>
            <person name="Davis N.W."/>
            <person name="Lim A."/>
            <person name="Dimalanta E.T."/>
            <person name="Potamousis K."/>
            <person name="Apodaca J."/>
            <person name="Anantharaman T.S."/>
            <person name="Lin J."/>
            <person name="Yen G."/>
            <person name="Schwartz D.C."/>
            <person name="Welch R.A."/>
            <person name="Blattner F.R."/>
        </authorList>
    </citation>
    <scope>NUCLEOTIDE SEQUENCE [LARGE SCALE GENOMIC DNA]</scope>
    <source>
        <strain>O157:H7 / EDL933 / ATCC 700927 / EHEC</strain>
    </source>
</reference>
<reference key="2">
    <citation type="journal article" date="2001" name="DNA Res.">
        <title>Complete genome sequence of enterohemorrhagic Escherichia coli O157:H7 and genomic comparison with a laboratory strain K-12.</title>
        <authorList>
            <person name="Hayashi T."/>
            <person name="Makino K."/>
            <person name="Ohnishi M."/>
            <person name="Kurokawa K."/>
            <person name="Ishii K."/>
            <person name="Yokoyama K."/>
            <person name="Han C.-G."/>
            <person name="Ohtsubo E."/>
            <person name="Nakayama K."/>
            <person name="Murata T."/>
            <person name="Tanaka M."/>
            <person name="Tobe T."/>
            <person name="Iida T."/>
            <person name="Takami H."/>
            <person name="Honda T."/>
            <person name="Sasakawa C."/>
            <person name="Ogasawara N."/>
            <person name="Yasunaga T."/>
            <person name="Kuhara S."/>
            <person name="Shiba T."/>
            <person name="Hattori M."/>
            <person name="Shinagawa H."/>
        </authorList>
    </citation>
    <scope>NUCLEOTIDE SEQUENCE [LARGE SCALE GENOMIC DNA]</scope>
    <source>
        <strain>O157:H7 / Sakai / RIMD 0509952 / EHEC</strain>
    </source>
</reference>